<name>Y1081_THENE</name>
<sequence>MFPYKIVEDVVILMPNKELNIENAHLFKKWVFDEFLNKGYNKILLVLSDVESIDSFSLGVIVNILKSVSSVGGFFALVSPNERVERVLSITNLDRIVKIYDTISEALEEVQGR</sequence>
<keyword id="KW-0597">Phosphoprotein</keyword>
<accession>O86949</accession>
<reference key="1">
    <citation type="submission" date="1998-06" db="EMBL/GenBank/DDBJ databases">
        <authorList>
            <person name="Zverlov V.V."/>
        </authorList>
    </citation>
    <scope>NUCLEOTIDE SEQUENCE [GENOMIC DNA]</scope>
    <source>
        <strain>Z2706-MC24</strain>
    </source>
</reference>
<organism>
    <name type="scientific">Thermotoga neapolitana</name>
    <dbReference type="NCBI Taxonomy" id="2337"/>
    <lineage>
        <taxon>Bacteria</taxon>
        <taxon>Thermotogati</taxon>
        <taxon>Thermotogota</taxon>
        <taxon>Thermotogae</taxon>
        <taxon>Thermotogales</taxon>
        <taxon>Thermotogaceae</taxon>
        <taxon>Thermotoga</taxon>
    </lineage>
</organism>
<protein>
    <recommendedName>
        <fullName>Putative anti-sigma factor antagonist TM1081 homolog</fullName>
    </recommendedName>
    <alternativeName>
        <fullName>ORF3</fullName>
    </alternativeName>
</protein>
<proteinExistence type="inferred from homology"/>
<evidence type="ECO:0000250" key="1"/>
<evidence type="ECO:0000255" key="2">
    <source>
        <dbReference type="PROSITE-ProRule" id="PRU00198"/>
    </source>
</evidence>
<evidence type="ECO:0000305" key="3"/>
<feature type="chain" id="PRO_0000194207" description="Putative anti-sigma factor antagonist TM1081 homolog">
    <location>
        <begin position="1"/>
        <end position="113"/>
    </location>
</feature>
<feature type="domain" description="STAS" evidence="2">
    <location>
        <begin position="1"/>
        <end position="110"/>
    </location>
</feature>
<feature type="modified residue" description="Phosphoserine" evidence="1">
    <location>
        <position position="55"/>
    </location>
</feature>
<dbReference type="EMBL" id="AJ007446">
    <property type="protein sequence ID" value="CAA07514.1"/>
    <property type="molecule type" value="Genomic_DNA"/>
</dbReference>
<dbReference type="SMR" id="O86949"/>
<dbReference type="GO" id="GO:0043856">
    <property type="term" value="F:anti-sigma factor antagonist activity"/>
    <property type="evidence" value="ECO:0007669"/>
    <property type="project" value="InterPro"/>
</dbReference>
<dbReference type="CDD" id="cd07043">
    <property type="entry name" value="STAS_anti-anti-sigma_factors"/>
    <property type="match status" value="1"/>
</dbReference>
<dbReference type="Gene3D" id="3.30.750.24">
    <property type="entry name" value="STAS domain"/>
    <property type="match status" value="1"/>
</dbReference>
<dbReference type="InterPro" id="IPR003658">
    <property type="entry name" value="Anti-sigma_ant"/>
</dbReference>
<dbReference type="InterPro" id="IPR002645">
    <property type="entry name" value="STAS_dom"/>
</dbReference>
<dbReference type="InterPro" id="IPR036513">
    <property type="entry name" value="STAS_dom_sf"/>
</dbReference>
<dbReference type="NCBIfam" id="TIGR00377">
    <property type="entry name" value="ant_ant_sig"/>
    <property type="match status" value="1"/>
</dbReference>
<dbReference type="PANTHER" id="PTHR33495:SF2">
    <property type="entry name" value="ANTI-SIGMA FACTOR ANTAGONIST TM_1081-RELATED"/>
    <property type="match status" value="1"/>
</dbReference>
<dbReference type="PANTHER" id="PTHR33495">
    <property type="entry name" value="ANTI-SIGMA FACTOR ANTAGONIST TM_1081-RELATED-RELATED"/>
    <property type="match status" value="1"/>
</dbReference>
<dbReference type="Pfam" id="PF01740">
    <property type="entry name" value="STAS"/>
    <property type="match status" value="1"/>
</dbReference>
<dbReference type="SUPFAM" id="SSF52091">
    <property type="entry name" value="SpoIIaa-like"/>
    <property type="match status" value="1"/>
</dbReference>
<dbReference type="PROSITE" id="PS50801">
    <property type="entry name" value="STAS"/>
    <property type="match status" value="1"/>
</dbReference>
<comment type="function">
    <text evidence="1">In the phosphorylated form it could act as an anti-anti-sigma factor that counteracts an anti-sigma factor and thus releases a sigma factor from inhibition.</text>
</comment>
<comment type="PTM">
    <text evidence="1">Phosphorylated on a serine residue.</text>
</comment>
<comment type="similarity">
    <text evidence="3">Belongs to the anti-sigma-factor antagonist family.</text>
</comment>